<accession>P94500</accession>
<accession>O08186</accession>
<organism>
    <name type="scientific">Bacillus subtilis (strain 168)</name>
    <dbReference type="NCBI Taxonomy" id="224308"/>
    <lineage>
        <taxon>Bacteria</taxon>
        <taxon>Bacillati</taxon>
        <taxon>Bacillota</taxon>
        <taxon>Bacilli</taxon>
        <taxon>Bacillales</taxon>
        <taxon>Bacillaceae</taxon>
        <taxon>Bacillus</taxon>
    </lineage>
</organism>
<proteinExistence type="predicted"/>
<name>YRDK_BACSU</name>
<sequence>MRLYTEYIPNKNKLINQQQYHSDLQDLLHQWILQLLQLDVLPLSNRKYQSSRCHPKSVGEYLIVVRAIDALGNSQPLTSRRNQVSRAMTFVQNSLNEENLHPNID</sequence>
<protein>
    <recommendedName>
        <fullName>Uncharacterized protein YrdK</fullName>
    </recommendedName>
</protein>
<reference key="1">
    <citation type="journal article" date="1997" name="J. Bacteriol.">
        <title>Altered transcription activation specificity of a mutant form of Bacillus subtilis GltR, a LysR family member.</title>
        <authorList>
            <person name="Belitsky B.R."/>
            <person name="Sonenshein A.L."/>
        </authorList>
    </citation>
    <scope>NUCLEOTIDE SEQUENCE [GENOMIC DNA]</scope>
    <source>
        <strain>168 / SMY</strain>
    </source>
</reference>
<reference key="2">
    <citation type="journal article" date="1997" name="Microbiology">
        <title>Sequence of the Bacillus subtilis genome region in the vicinity of the lev operon reveals two new extracytoplasmic function RNA polymerase sigma factors SigV and SigZ.</title>
        <authorList>
            <person name="Sorokin A."/>
            <person name="Bolotin A."/>
            <person name="Purnelle B."/>
            <person name="Hilbert H."/>
            <person name="Lauber J."/>
            <person name="Duesterhoeft A."/>
            <person name="Ehrlich S.D."/>
        </authorList>
    </citation>
    <scope>NUCLEOTIDE SEQUENCE [GENOMIC DNA]</scope>
    <source>
        <strain>168</strain>
    </source>
</reference>
<reference key="3">
    <citation type="journal article" date="1997" name="Nature">
        <title>The complete genome sequence of the Gram-positive bacterium Bacillus subtilis.</title>
        <authorList>
            <person name="Kunst F."/>
            <person name="Ogasawara N."/>
            <person name="Moszer I."/>
            <person name="Albertini A.M."/>
            <person name="Alloni G."/>
            <person name="Azevedo V."/>
            <person name="Bertero M.G."/>
            <person name="Bessieres P."/>
            <person name="Bolotin A."/>
            <person name="Borchert S."/>
            <person name="Borriss R."/>
            <person name="Boursier L."/>
            <person name="Brans A."/>
            <person name="Braun M."/>
            <person name="Brignell S.C."/>
            <person name="Bron S."/>
            <person name="Brouillet S."/>
            <person name="Bruschi C.V."/>
            <person name="Caldwell B."/>
            <person name="Capuano V."/>
            <person name="Carter N.M."/>
            <person name="Choi S.-K."/>
            <person name="Codani J.-J."/>
            <person name="Connerton I.F."/>
            <person name="Cummings N.J."/>
            <person name="Daniel R.A."/>
            <person name="Denizot F."/>
            <person name="Devine K.M."/>
            <person name="Duesterhoeft A."/>
            <person name="Ehrlich S.D."/>
            <person name="Emmerson P.T."/>
            <person name="Entian K.-D."/>
            <person name="Errington J."/>
            <person name="Fabret C."/>
            <person name="Ferrari E."/>
            <person name="Foulger D."/>
            <person name="Fritz C."/>
            <person name="Fujita M."/>
            <person name="Fujita Y."/>
            <person name="Fuma S."/>
            <person name="Galizzi A."/>
            <person name="Galleron N."/>
            <person name="Ghim S.-Y."/>
            <person name="Glaser P."/>
            <person name="Goffeau A."/>
            <person name="Golightly E.J."/>
            <person name="Grandi G."/>
            <person name="Guiseppi G."/>
            <person name="Guy B.J."/>
            <person name="Haga K."/>
            <person name="Haiech J."/>
            <person name="Harwood C.R."/>
            <person name="Henaut A."/>
            <person name="Hilbert H."/>
            <person name="Holsappel S."/>
            <person name="Hosono S."/>
            <person name="Hullo M.-F."/>
            <person name="Itaya M."/>
            <person name="Jones L.-M."/>
            <person name="Joris B."/>
            <person name="Karamata D."/>
            <person name="Kasahara Y."/>
            <person name="Klaerr-Blanchard M."/>
            <person name="Klein C."/>
            <person name="Kobayashi Y."/>
            <person name="Koetter P."/>
            <person name="Koningstein G."/>
            <person name="Krogh S."/>
            <person name="Kumano M."/>
            <person name="Kurita K."/>
            <person name="Lapidus A."/>
            <person name="Lardinois S."/>
            <person name="Lauber J."/>
            <person name="Lazarevic V."/>
            <person name="Lee S.-M."/>
            <person name="Levine A."/>
            <person name="Liu H."/>
            <person name="Masuda S."/>
            <person name="Mauel C."/>
            <person name="Medigue C."/>
            <person name="Medina N."/>
            <person name="Mellado R.P."/>
            <person name="Mizuno M."/>
            <person name="Moestl D."/>
            <person name="Nakai S."/>
            <person name="Noback M."/>
            <person name="Noone D."/>
            <person name="O'Reilly M."/>
            <person name="Ogawa K."/>
            <person name="Ogiwara A."/>
            <person name="Oudega B."/>
            <person name="Park S.-H."/>
            <person name="Parro V."/>
            <person name="Pohl T.M."/>
            <person name="Portetelle D."/>
            <person name="Porwollik S."/>
            <person name="Prescott A.M."/>
            <person name="Presecan E."/>
            <person name="Pujic P."/>
            <person name="Purnelle B."/>
            <person name="Rapoport G."/>
            <person name="Rey M."/>
            <person name="Reynolds S."/>
            <person name="Rieger M."/>
            <person name="Rivolta C."/>
            <person name="Rocha E."/>
            <person name="Roche B."/>
            <person name="Rose M."/>
            <person name="Sadaie Y."/>
            <person name="Sato T."/>
            <person name="Scanlan E."/>
            <person name="Schleich S."/>
            <person name="Schroeter R."/>
            <person name="Scoffone F."/>
            <person name="Sekiguchi J."/>
            <person name="Sekowska A."/>
            <person name="Seror S.J."/>
            <person name="Serror P."/>
            <person name="Shin B.-S."/>
            <person name="Soldo B."/>
            <person name="Sorokin A."/>
            <person name="Tacconi E."/>
            <person name="Takagi T."/>
            <person name="Takahashi H."/>
            <person name="Takemaru K."/>
            <person name="Takeuchi M."/>
            <person name="Tamakoshi A."/>
            <person name="Tanaka T."/>
            <person name="Terpstra P."/>
            <person name="Tognoni A."/>
            <person name="Tosato V."/>
            <person name="Uchiyama S."/>
            <person name="Vandenbol M."/>
            <person name="Vannier F."/>
            <person name="Vassarotti A."/>
            <person name="Viari A."/>
            <person name="Wambutt R."/>
            <person name="Wedler E."/>
            <person name="Wedler H."/>
            <person name="Weitzenegger T."/>
            <person name="Winters P."/>
            <person name="Wipat A."/>
            <person name="Yamamoto H."/>
            <person name="Yamane K."/>
            <person name="Yasumoto K."/>
            <person name="Yata K."/>
            <person name="Yoshida K."/>
            <person name="Yoshikawa H.-F."/>
            <person name="Zumstein E."/>
            <person name="Yoshikawa H."/>
            <person name="Danchin A."/>
        </authorList>
    </citation>
    <scope>NUCLEOTIDE SEQUENCE [LARGE SCALE GENOMIC DNA]</scope>
    <source>
        <strain>168</strain>
    </source>
</reference>
<feature type="chain" id="PRO_0000049863" description="Uncharacterized protein YrdK">
    <location>
        <begin position="1"/>
        <end position="105"/>
    </location>
</feature>
<dbReference type="EMBL" id="U79494">
    <property type="protein sequence ID" value="AAB47962.1"/>
    <property type="molecule type" value="Genomic_DNA"/>
</dbReference>
<dbReference type="EMBL" id="U93876">
    <property type="protein sequence ID" value="AAB80904.1"/>
    <property type="molecule type" value="Genomic_DNA"/>
</dbReference>
<dbReference type="EMBL" id="AL009126">
    <property type="protein sequence ID" value="CAB14609.3"/>
    <property type="molecule type" value="Genomic_DNA"/>
</dbReference>
<dbReference type="PIR" id="D69973">
    <property type="entry name" value="D69973"/>
</dbReference>
<dbReference type="RefSeq" id="NP_390545.3">
    <property type="nucleotide sequence ID" value="NC_000964.3"/>
</dbReference>
<dbReference type="RefSeq" id="WP_009967853.1">
    <property type="nucleotide sequence ID" value="NZ_OZ025638.1"/>
</dbReference>
<dbReference type="FunCoup" id="P94500">
    <property type="interactions" value="137"/>
</dbReference>
<dbReference type="STRING" id="224308.BSU26680"/>
<dbReference type="PaxDb" id="224308-BSU26680"/>
<dbReference type="EnsemblBacteria" id="CAB14609">
    <property type="protein sequence ID" value="CAB14609"/>
    <property type="gene ID" value="BSU_26680"/>
</dbReference>
<dbReference type="GeneID" id="938740"/>
<dbReference type="KEGG" id="bsu:BSU26680"/>
<dbReference type="InParanoid" id="P94500"/>
<dbReference type="OrthoDB" id="9778777at2"/>
<dbReference type="BioCyc" id="BSUB:BSU26680-MONOMER"/>
<dbReference type="Proteomes" id="UP000001570">
    <property type="component" value="Chromosome"/>
</dbReference>
<gene>
    <name type="primary">yrdK</name>
    <name type="ordered locus">BSU26680</name>
</gene>
<keyword id="KW-1185">Reference proteome</keyword>